<reference key="1">
    <citation type="journal article" date="2002" name="J. Bacteriol.">
        <title>Whole-genome comparison of Mycobacterium tuberculosis clinical and laboratory strains.</title>
        <authorList>
            <person name="Fleischmann R.D."/>
            <person name="Alland D."/>
            <person name="Eisen J.A."/>
            <person name="Carpenter L."/>
            <person name="White O."/>
            <person name="Peterson J.D."/>
            <person name="DeBoy R.T."/>
            <person name="Dodson R.J."/>
            <person name="Gwinn M.L."/>
            <person name="Haft D.H."/>
            <person name="Hickey E.K."/>
            <person name="Kolonay J.F."/>
            <person name="Nelson W.C."/>
            <person name="Umayam L.A."/>
            <person name="Ermolaeva M.D."/>
            <person name="Salzberg S.L."/>
            <person name="Delcher A."/>
            <person name="Utterback T.R."/>
            <person name="Weidman J.F."/>
            <person name="Khouri H.M."/>
            <person name="Gill J."/>
            <person name="Mikula A."/>
            <person name="Bishai W."/>
            <person name="Jacobs W.R. Jr."/>
            <person name="Venter J.C."/>
            <person name="Fraser C.M."/>
        </authorList>
    </citation>
    <scope>NUCLEOTIDE SEQUENCE [LARGE SCALE GENOMIC DNA]</scope>
    <source>
        <strain>CDC 1551 / Oshkosh</strain>
    </source>
</reference>
<dbReference type="EC" id="3.2.2.-" evidence="1"/>
<dbReference type="EMBL" id="AE000516">
    <property type="protein sequence ID" value="AAK45996.1"/>
    <property type="molecule type" value="Genomic_DNA"/>
</dbReference>
<dbReference type="PIR" id="G70501">
    <property type="entry name" value="G70501"/>
</dbReference>
<dbReference type="RefSeq" id="WP_003408373.1">
    <property type="nucleotide sequence ID" value="NZ_KK341227.1"/>
</dbReference>
<dbReference type="SMR" id="P9WJP6"/>
<dbReference type="KEGG" id="mtc:MT1727.1"/>
<dbReference type="PATRIC" id="fig|83331.31.peg.1854"/>
<dbReference type="HOGENOM" id="CLU_060471_3_1_11"/>
<dbReference type="Proteomes" id="UP000001020">
    <property type="component" value="Chromosome"/>
</dbReference>
<dbReference type="GO" id="GO:0003905">
    <property type="term" value="F:alkylbase DNA N-glycosylase activity"/>
    <property type="evidence" value="ECO:0007669"/>
    <property type="project" value="InterPro"/>
</dbReference>
<dbReference type="GO" id="GO:0003677">
    <property type="term" value="F:DNA binding"/>
    <property type="evidence" value="ECO:0007669"/>
    <property type="project" value="InterPro"/>
</dbReference>
<dbReference type="GO" id="GO:0006284">
    <property type="term" value="P:base-excision repair"/>
    <property type="evidence" value="ECO:0007669"/>
    <property type="project" value="InterPro"/>
</dbReference>
<dbReference type="CDD" id="cd00540">
    <property type="entry name" value="AAG"/>
    <property type="match status" value="1"/>
</dbReference>
<dbReference type="Gene3D" id="3.10.300.10">
    <property type="entry name" value="Methylpurine-DNA glycosylase (MPG)"/>
    <property type="match status" value="1"/>
</dbReference>
<dbReference type="HAMAP" id="MF_00527">
    <property type="entry name" value="3MGH"/>
    <property type="match status" value="1"/>
</dbReference>
<dbReference type="InterPro" id="IPR011034">
    <property type="entry name" value="Formyl_transferase-like_C_sf"/>
</dbReference>
<dbReference type="InterPro" id="IPR003180">
    <property type="entry name" value="MPG"/>
</dbReference>
<dbReference type="InterPro" id="IPR036995">
    <property type="entry name" value="MPG_sf"/>
</dbReference>
<dbReference type="NCBIfam" id="TIGR00567">
    <property type="entry name" value="3mg"/>
    <property type="match status" value="1"/>
</dbReference>
<dbReference type="NCBIfam" id="NF002003">
    <property type="entry name" value="PRK00802.1-3"/>
    <property type="match status" value="1"/>
</dbReference>
<dbReference type="PANTHER" id="PTHR10429">
    <property type="entry name" value="DNA-3-METHYLADENINE GLYCOSYLASE"/>
    <property type="match status" value="1"/>
</dbReference>
<dbReference type="PANTHER" id="PTHR10429:SF0">
    <property type="entry name" value="DNA-3-METHYLADENINE GLYCOSYLASE"/>
    <property type="match status" value="1"/>
</dbReference>
<dbReference type="Pfam" id="PF02245">
    <property type="entry name" value="Pur_DNA_glyco"/>
    <property type="match status" value="1"/>
</dbReference>
<dbReference type="SUPFAM" id="SSF50486">
    <property type="entry name" value="FMT C-terminal domain-like"/>
    <property type="match status" value="1"/>
</dbReference>
<gene>
    <name type="ordered locus">MT1727.1</name>
</gene>
<accession>P9WJP6</accession>
<accession>L0TAC1</accession>
<accession>O33190</accession>
<accession>P65412</accession>
<organism>
    <name type="scientific">Mycobacterium tuberculosis (strain CDC 1551 / Oshkosh)</name>
    <dbReference type="NCBI Taxonomy" id="83331"/>
    <lineage>
        <taxon>Bacteria</taxon>
        <taxon>Bacillati</taxon>
        <taxon>Actinomycetota</taxon>
        <taxon>Actinomycetes</taxon>
        <taxon>Mycobacteriales</taxon>
        <taxon>Mycobacteriaceae</taxon>
        <taxon>Mycobacterium</taxon>
        <taxon>Mycobacterium tuberculosis complex</taxon>
    </lineage>
</organism>
<feature type="chain" id="PRO_0000427793" description="Putative 3-methyladenine DNA glycosylase">
    <location>
        <begin position="1"/>
        <end position="203"/>
    </location>
</feature>
<sequence>MNAEELAIDPVAAAHRLLGATIAGRGVRAMVVEVEAYGGVPDGPWPDAAAHSYRGRNGRNDVMFGPPGRLYTYRSHGIHVCANVACGPDGTAAAVLLRAAAIEDGAELATSRRGQTVRAVALARGPGNLCAALGITMADNGIDLFDPSSPVRLRLNDTHRARSGPRVGVSQAADRPWRLWLTGRPEVSAYRRSSRAPARGASD</sequence>
<protein>
    <recommendedName>
        <fullName evidence="1">Putative 3-methyladenine DNA glycosylase</fullName>
        <ecNumber evidence="1">3.2.2.-</ecNumber>
    </recommendedName>
</protein>
<proteinExistence type="inferred from homology"/>
<evidence type="ECO:0000255" key="1">
    <source>
        <dbReference type="HAMAP-Rule" id="MF_00527"/>
    </source>
</evidence>
<comment type="similarity">
    <text evidence="1">Belongs to the DNA glycosylase MPG family.</text>
</comment>
<keyword id="KW-0227">DNA damage</keyword>
<keyword id="KW-0234">DNA repair</keyword>
<keyword id="KW-0378">Hydrolase</keyword>
<keyword id="KW-1185">Reference proteome</keyword>
<name>3MGH_MYCTO</name>